<keyword id="KW-0413">Isomerase</keyword>
<keyword id="KW-1185">Reference proteome</keyword>
<keyword id="KW-0697">Rotamase</keyword>
<reference key="1">
    <citation type="journal article" date="2003" name="Nucleic Acids Res.">
        <title>What's in the genome of a filamentous fungus? Analysis of the Neurospora genome sequence.</title>
        <authorList>
            <person name="Mannhaupt G."/>
            <person name="Montrone C."/>
            <person name="Haase D."/>
            <person name="Mewes H.-W."/>
            <person name="Aign V."/>
            <person name="Hoheisel J.D."/>
            <person name="Fartmann B."/>
            <person name="Nyakatura G."/>
            <person name="Kempken F."/>
            <person name="Maier J."/>
            <person name="Schulte U."/>
        </authorList>
    </citation>
    <scope>NUCLEOTIDE SEQUENCE [LARGE SCALE GENOMIC DNA]</scope>
    <source>
        <strain>ATCC 24698 / 74-OR23-1A / CBS 708.71 / DSM 1257 / FGSC 987</strain>
    </source>
</reference>
<reference key="2">
    <citation type="journal article" date="2003" name="Nature">
        <title>The genome sequence of the filamentous fungus Neurospora crassa.</title>
        <authorList>
            <person name="Galagan J.E."/>
            <person name="Calvo S.E."/>
            <person name="Borkovich K.A."/>
            <person name="Selker E.U."/>
            <person name="Read N.D."/>
            <person name="Jaffe D.B."/>
            <person name="FitzHugh W."/>
            <person name="Ma L.-J."/>
            <person name="Smirnov S."/>
            <person name="Purcell S."/>
            <person name="Rehman B."/>
            <person name="Elkins T."/>
            <person name="Engels R."/>
            <person name="Wang S."/>
            <person name="Nielsen C.B."/>
            <person name="Butler J."/>
            <person name="Endrizzi M."/>
            <person name="Qui D."/>
            <person name="Ianakiev P."/>
            <person name="Bell-Pedersen D."/>
            <person name="Nelson M.A."/>
            <person name="Werner-Washburne M."/>
            <person name="Selitrennikoff C.P."/>
            <person name="Kinsey J.A."/>
            <person name="Braun E.L."/>
            <person name="Zelter A."/>
            <person name="Schulte U."/>
            <person name="Kothe G.O."/>
            <person name="Jedd G."/>
            <person name="Mewes H.-W."/>
            <person name="Staben C."/>
            <person name="Marcotte E."/>
            <person name="Greenberg D."/>
            <person name="Roy A."/>
            <person name="Foley K."/>
            <person name="Naylor J."/>
            <person name="Stange-Thomann N."/>
            <person name="Barrett R."/>
            <person name="Gnerre S."/>
            <person name="Kamal M."/>
            <person name="Kamvysselis M."/>
            <person name="Mauceli E.W."/>
            <person name="Bielke C."/>
            <person name="Rudd S."/>
            <person name="Frishman D."/>
            <person name="Krystofova S."/>
            <person name="Rasmussen C."/>
            <person name="Metzenberg R.L."/>
            <person name="Perkins D.D."/>
            <person name="Kroken S."/>
            <person name="Cogoni C."/>
            <person name="Macino G."/>
            <person name="Catcheside D.E.A."/>
            <person name="Li W."/>
            <person name="Pratt R.J."/>
            <person name="Osmani S.A."/>
            <person name="DeSouza C.P.C."/>
            <person name="Glass N.L."/>
            <person name="Orbach M.J."/>
            <person name="Berglund J.A."/>
            <person name="Voelker R."/>
            <person name="Yarden O."/>
            <person name="Plamann M."/>
            <person name="Seiler S."/>
            <person name="Dunlap J.C."/>
            <person name="Radford A."/>
            <person name="Aramayo R."/>
            <person name="Natvig D.O."/>
            <person name="Alex L.A."/>
            <person name="Mannhaupt G."/>
            <person name="Ebbole D.J."/>
            <person name="Freitag M."/>
            <person name="Paulsen I."/>
            <person name="Sachs M.S."/>
            <person name="Lander E.S."/>
            <person name="Nusbaum C."/>
            <person name="Birren B.W."/>
        </authorList>
    </citation>
    <scope>NUCLEOTIDE SEQUENCE [LARGE SCALE GENOMIC DNA] OF 17-167</scope>
    <source>
        <strain>ATCC 24698 / 74-OR23-1A / CBS 708.71 / DSM 1257 / FGSC 987</strain>
    </source>
</reference>
<sequence>MSVTLHTTLGDLKIEIFCESVPKTAENFLALCASGYYNASPFHRMIPSFMVQTGAPANPSPPENPKGGRSIYGPTFEDEIRPVLRHNERGIVSMANKGPNTNGSQFFILFDKAPHLDGLNTVFGKLIGDESLQTLAKLEGLEVDKKNRIKEEVRIERVTVHANPLAK</sequence>
<protein>
    <recommendedName>
        <fullName>Peptidyl-prolyl cis-trans isomerase-like 3</fullName>
        <shortName>PPIase</shortName>
        <ecNumber>5.2.1.8</ecNumber>
    </recommendedName>
    <alternativeName>
        <fullName>Rotamase</fullName>
    </alternativeName>
</protein>
<accession>Q6MWS8</accession>
<accession>A7UX70</accession>
<proteinExistence type="inferred from homology"/>
<evidence type="ECO:0000250" key="1"/>
<evidence type="ECO:0000255" key="2">
    <source>
        <dbReference type="PROSITE-ProRule" id="PRU00156"/>
    </source>
</evidence>
<evidence type="ECO:0000305" key="3"/>
<comment type="function">
    <text evidence="1">PPIases accelerate the folding of proteins. It catalyzes the cis-trans isomerization of proline imidic peptide bonds in oligopeptides (By similarity).</text>
</comment>
<comment type="catalytic activity">
    <reaction>
        <text>[protein]-peptidylproline (omega=180) = [protein]-peptidylproline (omega=0)</text>
        <dbReference type="Rhea" id="RHEA:16237"/>
        <dbReference type="Rhea" id="RHEA-COMP:10747"/>
        <dbReference type="Rhea" id="RHEA-COMP:10748"/>
        <dbReference type="ChEBI" id="CHEBI:83833"/>
        <dbReference type="ChEBI" id="CHEBI:83834"/>
        <dbReference type="EC" id="5.2.1.8"/>
    </reaction>
</comment>
<comment type="similarity">
    <text evidence="3">Belongs to the cyclophilin-type PPIase family. PPIL3 subfamily.</text>
</comment>
<name>PPIL3_NEUCR</name>
<dbReference type="EC" id="5.2.1.8"/>
<dbReference type="EMBL" id="BX842594">
    <property type="protein sequence ID" value="CAE75684.1"/>
    <property type="molecule type" value="Genomic_DNA"/>
</dbReference>
<dbReference type="EMBL" id="CM002237">
    <property type="protein sequence ID" value="EDO64970.1"/>
    <property type="molecule type" value="Genomic_DNA"/>
</dbReference>
<dbReference type="RefSeq" id="XP_001728061.1">
    <property type="nucleotide sequence ID" value="XM_001728009.2"/>
</dbReference>
<dbReference type="SMR" id="Q6MWS8"/>
<dbReference type="STRING" id="367110.Q6MWS8"/>
<dbReference type="PaxDb" id="5141-EFNCRP00000008445"/>
<dbReference type="EnsemblFungi" id="EDO64970">
    <property type="protein sequence ID" value="EDO64970"/>
    <property type="gene ID" value="NCU10388"/>
</dbReference>
<dbReference type="GeneID" id="5847142"/>
<dbReference type="KEGG" id="ncr:NCU10388"/>
<dbReference type="VEuPathDB" id="FungiDB:NCU10388"/>
<dbReference type="HOGENOM" id="CLU_012062_16_3_1"/>
<dbReference type="InParanoid" id="Q6MWS8"/>
<dbReference type="OMA" id="VPFHRVM"/>
<dbReference type="OrthoDB" id="271386at2759"/>
<dbReference type="Proteomes" id="UP000001805">
    <property type="component" value="Chromosome 6, Linkage Group II"/>
</dbReference>
<dbReference type="GO" id="GO:0071013">
    <property type="term" value="C:catalytic step 2 spliceosome"/>
    <property type="evidence" value="ECO:0000318"/>
    <property type="project" value="GO_Central"/>
</dbReference>
<dbReference type="GO" id="GO:0003755">
    <property type="term" value="F:peptidyl-prolyl cis-trans isomerase activity"/>
    <property type="evidence" value="ECO:0000318"/>
    <property type="project" value="GO_Central"/>
</dbReference>
<dbReference type="GO" id="GO:0006457">
    <property type="term" value="P:protein folding"/>
    <property type="evidence" value="ECO:0000318"/>
    <property type="project" value="GO_Central"/>
</dbReference>
<dbReference type="CDD" id="cd01928">
    <property type="entry name" value="Cyclophilin_PPIL3_like"/>
    <property type="match status" value="1"/>
</dbReference>
<dbReference type="FunFam" id="2.40.100.10:FF:000041">
    <property type="entry name" value="Peptidyl-prolyl cis-trans isomerase"/>
    <property type="match status" value="1"/>
</dbReference>
<dbReference type="Gene3D" id="2.40.100.10">
    <property type="entry name" value="Cyclophilin-like"/>
    <property type="match status" value="1"/>
</dbReference>
<dbReference type="InterPro" id="IPR029000">
    <property type="entry name" value="Cyclophilin-like_dom_sf"/>
</dbReference>
<dbReference type="InterPro" id="IPR024936">
    <property type="entry name" value="Cyclophilin-type_PPIase"/>
</dbReference>
<dbReference type="InterPro" id="IPR020892">
    <property type="entry name" value="Cyclophilin-type_PPIase_CS"/>
</dbReference>
<dbReference type="InterPro" id="IPR002130">
    <property type="entry name" value="Cyclophilin-type_PPIase_dom"/>
</dbReference>
<dbReference type="InterPro" id="IPR044666">
    <property type="entry name" value="Cyclophilin_A-like"/>
</dbReference>
<dbReference type="PANTHER" id="PTHR45625:SF2">
    <property type="entry name" value="PEPTIDYL-PROLYL CIS-TRANS ISOMERASE-LIKE 3"/>
    <property type="match status" value="1"/>
</dbReference>
<dbReference type="PANTHER" id="PTHR45625">
    <property type="entry name" value="PEPTIDYL-PROLYL CIS-TRANS ISOMERASE-RELATED"/>
    <property type="match status" value="1"/>
</dbReference>
<dbReference type="Pfam" id="PF00160">
    <property type="entry name" value="Pro_isomerase"/>
    <property type="match status" value="1"/>
</dbReference>
<dbReference type="PIRSF" id="PIRSF001467">
    <property type="entry name" value="Peptidylpro_ismrse"/>
    <property type="match status" value="1"/>
</dbReference>
<dbReference type="PRINTS" id="PR00153">
    <property type="entry name" value="CSAPPISMRASE"/>
</dbReference>
<dbReference type="SUPFAM" id="SSF50891">
    <property type="entry name" value="Cyclophilin-like"/>
    <property type="match status" value="1"/>
</dbReference>
<dbReference type="PROSITE" id="PS00170">
    <property type="entry name" value="CSA_PPIASE_1"/>
    <property type="match status" value="1"/>
</dbReference>
<dbReference type="PROSITE" id="PS50072">
    <property type="entry name" value="CSA_PPIASE_2"/>
    <property type="match status" value="1"/>
</dbReference>
<organism>
    <name type="scientific">Neurospora crassa (strain ATCC 24698 / 74-OR23-1A / CBS 708.71 / DSM 1257 / FGSC 987)</name>
    <dbReference type="NCBI Taxonomy" id="367110"/>
    <lineage>
        <taxon>Eukaryota</taxon>
        <taxon>Fungi</taxon>
        <taxon>Dikarya</taxon>
        <taxon>Ascomycota</taxon>
        <taxon>Pezizomycotina</taxon>
        <taxon>Sordariomycetes</taxon>
        <taxon>Sordariomycetidae</taxon>
        <taxon>Sordariales</taxon>
        <taxon>Sordariaceae</taxon>
        <taxon>Neurospora</taxon>
    </lineage>
</organism>
<feature type="chain" id="PRO_0000232972" description="Peptidyl-prolyl cis-trans isomerase-like 3">
    <location>
        <begin position="1"/>
        <end position="167"/>
    </location>
</feature>
<feature type="domain" description="PPIase cyclophilin-type" evidence="2">
    <location>
        <begin position="1"/>
        <end position="160"/>
    </location>
</feature>
<gene>
    <name type="primary">cyp-10</name>
    <name type="ORF">B18P7.110</name>
    <name type="ORF">NCU10388</name>
</gene>